<protein>
    <recommendedName>
        <fullName evidence="1">Protein RecA</fullName>
    </recommendedName>
    <alternativeName>
        <fullName evidence="1">Recombinase A</fullName>
    </alternativeName>
</protein>
<evidence type="ECO:0000255" key="1">
    <source>
        <dbReference type="HAMAP-Rule" id="MF_00268"/>
    </source>
</evidence>
<evidence type="ECO:0000256" key="2">
    <source>
        <dbReference type="SAM" id="MobiDB-lite"/>
    </source>
</evidence>
<accession>P62221</accession>
<keyword id="KW-0067">ATP-binding</keyword>
<keyword id="KW-0963">Cytoplasm</keyword>
<keyword id="KW-0227">DNA damage</keyword>
<keyword id="KW-0233">DNA recombination</keyword>
<keyword id="KW-0234">DNA repair</keyword>
<keyword id="KW-0238">DNA-binding</keyword>
<keyword id="KW-0547">Nucleotide-binding</keyword>
<keyword id="KW-1185">Reference proteome</keyword>
<keyword id="KW-0742">SOS response</keyword>
<feature type="chain" id="PRO_0000122885" description="Protein RecA">
    <location>
        <begin position="1"/>
        <end position="414"/>
    </location>
</feature>
<feature type="region of interest" description="Disordered" evidence="2">
    <location>
        <begin position="361"/>
        <end position="414"/>
    </location>
</feature>
<feature type="compositionally biased region" description="Basic and acidic residues" evidence="2">
    <location>
        <begin position="361"/>
        <end position="384"/>
    </location>
</feature>
<feature type="binding site" evidence="1">
    <location>
        <begin position="78"/>
        <end position="85"/>
    </location>
    <ligand>
        <name>ATP</name>
        <dbReference type="ChEBI" id="CHEBI:30616"/>
    </ligand>
</feature>
<proteinExistence type="inferred from homology"/>
<name>RECA_TREDE</name>
<sequence length="414" mass="44639">MAKAKNEVPAVANPDDKLKALEAARLQIEKQFGQGSLMKLGNNSAIGNIEIIPSGSILLDEALGIGGYPRGRIIEIFGPESSGKTTIALHAVAEAQKQGGIAAFIDAEHALDPQYAKALGVNIDELWVSQPDTGEQALEIAESLVRSGAVDVIVIDSVAALTPQAEIAGEMGDSHMGLQARLMSQALRKLTAIIGKSNCMIIFINQIRMKIGVMFGSPETTTGGNALKFYASVRLDVRKIETLGKDDDEAWGNKIRVKVVKNKVAPPFRKVEMEILFGKGVCPYGSLLDSAVKQEIIGKSGSWYSYGDDKIGQGRPNAVKFLEENIDIAQKIEKELREKLFPGRPFVSSFVEKTKEQKEAQEKAVEALKKEEGSKEDALTGNKDETDDSAQKNSAASKAKRAEVVGLPADDSLF</sequence>
<reference key="1">
    <citation type="journal article" date="2004" name="Proc. Natl. Acad. Sci. U.S.A.">
        <title>Comparison of the genome of the oral pathogen Treponema denticola with other spirochete genomes.</title>
        <authorList>
            <person name="Seshadri R."/>
            <person name="Myers G.S.A."/>
            <person name="Tettelin H."/>
            <person name="Eisen J.A."/>
            <person name="Heidelberg J.F."/>
            <person name="Dodson R.J."/>
            <person name="Davidsen T.M."/>
            <person name="DeBoy R.T."/>
            <person name="Fouts D.E."/>
            <person name="Haft D.H."/>
            <person name="Selengut J."/>
            <person name="Ren Q."/>
            <person name="Brinkac L.M."/>
            <person name="Madupu R."/>
            <person name="Kolonay J.F."/>
            <person name="Durkin S.A."/>
            <person name="Daugherty S.C."/>
            <person name="Shetty J."/>
            <person name="Shvartsbeyn A."/>
            <person name="Gebregeorgis E."/>
            <person name="Geer K."/>
            <person name="Tsegaye G."/>
            <person name="Malek J.A."/>
            <person name="Ayodeji B."/>
            <person name="Shatsman S."/>
            <person name="McLeod M.P."/>
            <person name="Smajs D."/>
            <person name="Howell J.K."/>
            <person name="Pal S."/>
            <person name="Amin A."/>
            <person name="Vashisth P."/>
            <person name="McNeill T.Z."/>
            <person name="Xiang Q."/>
            <person name="Sodergren E."/>
            <person name="Baca E."/>
            <person name="Weinstock G.M."/>
            <person name="Norris S.J."/>
            <person name="Fraser C.M."/>
            <person name="Paulsen I.T."/>
        </authorList>
    </citation>
    <scope>NUCLEOTIDE SEQUENCE [LARGE SCALE GENOMIC DNA]</scope>
    <source>
        <strain>ATCC 35405 / DSM 14222 / CIP 103919 / JCM 8153 / KCTC 15104</strain>
    </source>
</reference>
<dbReference type="EMBL" id="AE017226">
    <property type="protein sequence ID" value="AAS11363.1"/>
    <property type="molecule type" value="Genomic_DNA"/>
</dbReference>
<dbReference type="RefSeq" id="NP_971482.1">
    <property type="nucleotide sequence ID" value="NC_002967.9"/>
</dbReference>
<dbReference type="RefSeq" id="WP_002682153.1">
    <property type="nucleotide sequence ID" value="NC_002967.9"/>
</dbReference>
<dbReference type="SMR" id="P62221"/>
<dbReference type="STRING" id="243275.TDE_0872"/>
<dbReference type="PaxDb" id="243275-TDE_0872"/>
<dbReference type="GeneID" id="2740919"/>
<dbReference type="KEGG" id="tde:TDE_0872"/>
<dbReference type="PATRIC" id="fig|243275.7.peg.842"/>
<dbReference type="eggNOG" id="COG0468">
    <property type="taxonomic scope" value="Bacteria"/>
</dbReference>
<dbReference type="HOGENOM" id="CLU_040469_3_3_12"/>
<dbReference type="OrthoDB" id="9776733at2"/>
<dbReference type="Proteomes" id="UP000008212">
    <property type="component" value="Chromosome"/>
</dbReference>
<dbReference type="GO" id="GO:0005829">
    <property type="term" value="C:cytosol"/>
    <property type="evidence" value="ECO:0007669"/>
    <property type="project" value="TreeGrafter"/>
</dbReference>
<dbReference type="GO" id="GO:0005524">
    <property type="term" value="F:ATP binding"/>
    <property type="evidence" value="ECO:0007669"/>
    <property type="project" value="UniProtKB-UniRule"/>
</dbReference>
<dbReference type="GO" id="GO:0016887">
    <property type="term" value="F:ATP hydrolysis activity"/>
    <property type="evidence" value="ECO:0007669"/>
    <property type="project" value="InterPro"/>
</dbReference>
<dbReference type="GO" id="GO:0140664">
    <property type="term" value="F:ATP-dependent DNA damage sensor activity"/>
    <property type="evidence" value="ECO:0007669"/>
    <property type="project" value="InterPro"/>
</dbReference>
<dbReference type="GO" id="GO:0003684">
    <property type="term" value="F:damaged DNA binding"/>
    <property type="evidence" value="ECO:0007669"/>
    <property type="project" value="UniProtKB-UniRule"/>
</dbReference>
<dbReference type="GO" id="GO:0003697">
    <property type="term" value="F:single-stranded DNA binding"/>
    <property type="evidence" value="ECO:0007669"/>
    <property type="project" value="UniProtKB-UniRule"/>
</dbReference>
<dbReference type="GO" id="GO:0006310">
    <property type="term" value="P:DNA recombination"/>
    <property type="evidence" value="ECO:0007669"/>
    <property type="project" value="UniProtKB-UniRule"/>
</dbReference>
<dbReference type="GO" id="GO:0006281">
    <property type="term" value="P:DNA repair"/>
    <property type="evidence" value="ECO:0007669"/>
    <property type="project" value="UniProtKB-UniRule"/>
</dbReference>
<dbReference type="GO" id="GO:0009432">
    <property type="term" value="P:SOS response"/>
    <property type="evidence" value="ECO:0007669"/>
    <property type="project" value="UniProtKB-UniRule"/>
</dbReference>
<dbReference type="CDD" id="cd00983">
    <property type="entry name" value="RecA"/>
    <property type="match status" value="1"/>
</dbReference>
<dbReference type="FunFam" id="3.40.50.300:FF:000087">
    <property type="entry name" value="Recombinase RecA"/>
    <property type="match status" value="1"/>
</dbReference>
<dbReference type="Gene3D" id="3.40.50.300">
    <property type="entry name" value="P-loop containing nucleotide triphosphate hydrolases"/>
    <property type="match status" value="1"/>
</dbReference>
<dbReference type="HAMAP" id="MF_00268">
    <property type="entry name" value="RecA"/>
    <property type="match status" value="1"/>
</dbReference>
<dbReference type="InterPro" id="IPR003593">
    <property type="entry name" value="AAA+_ATPase"/>
</dbReference>
<dbReference type="InterPro" id="IPR013765">
    <property type="entry name" value="DNA_recomb/repair_RecA"/>
</dbReference>
<dbReference type="InterPro" id="IPR020584">
    <property type="entry name" value="DNA_recomb/repair_RecA_CS"/>
</dbReference>
<dbReference type="InterPro" id="IPR027417">
    <property type="entry name" value="P-loop_NTPase"/>
</dbReference>
<dbReference type="InterPro" id="IPR049261">
    <property type="entry name" value="RecA-like_C"/>
</dbReference>
<dbReference type="InterPro" id="IPR049428">
    <property type="entry name" value="RecA-like_N"/>
</dbReference>
<dbReference type="InterPro" id="IPR020588">
    <property type="entry name" value="RecA_ATP-bd"/>
</dbReference>
<dbReference type="InterPro" id="IPR023400">
    <property type="entry name" value="RecA_C_sf"/>
</dbReference>
<dbReference type="InterPro" id="IPR020587">
    <property type="entry name" value="RecA_monomer-monomer_interface"/>
</dbReference>
<dbReference type="NCBIfam" id="TIGR02012">
    <property type="entry name" value="tigrfam_recA"/>
    <property type="match status" value="1"/>
</dbReference>
<dbReference type="PANTHER" id="PTHR45900:SF1">
    <property type="entry name" value="MITOCHONDRIAL DNA REPAIR PROTEIN RECA HOMOLOG-RELATED"/>
    <property type="match status" value="1"/>
</dbReference>
<dbReference type="PANTHER" id="PTHR45900">
    <property type="entry name" value="RECA"/>
    <property type="match status" value="1"/>
</dbReference>
<dbReference type="Pfam" id="PF00154">
    <property type="entry name" value="RecA"/>
    <property type="match status" value="1"/>
</dbReference>
<dbReference type="Pfam" id="PF21096">
    <property type="entry name" value="RecA_C"/>
    <property type="match status" value="1"/>
</dbReference>
<dbReference type="PRINTS" id="PR00142">
    <property type="entry name" value="RECA"/>
</dbReference>
<dbReference type="SMART" id="SM00382">
    <property type="entry name" value="AAA"/>
    <property type="match status" value="1"/>
</dbReference>
<dbReference type="SUPFAM" id="SSF52540">
    <property type="entry name" value="P-loop containing nucleoside triphosphate hydrolases"/>
    <property type="match status" value="1"/>
</dbReference>
<dbReference type="SUPFAM" id="SSF54752">
    <property type="entry name" value="RecA protein, C-terminal domain"/>
    <property type="match status" value="1"/>
</dbReference>
<dbReference type="PROSITE" id="PS00321">
    <property type="entry name" value="RECA_1"/>
    <property type="match status" value="1"/>
</dbReference>
<dbReference type="PROSITE" id="PS50162">
    <property type="entry name" value="RECA_2"/>
    <property type="match status" value="1"/>
</dbReference>
<dbReference type="PROSITE" id="PS50163">
    <property type="entry name" value="RECA_3"/>
    <property type="match status" value="1"/>
</dbReference>
<comment type="function">
    <text evidence="1">Can catalyze the hydrolysis of ATP in the presence of single-stranded DNA, the ATP-dependent uptake of single-stranded DNA by duplex DNA, and the ATP-dependent hybridization of homologous single-stranded DNAs. It interacts with LexA causing its activation and leading to its autocatalytic cleavage.</text>
</comment>
<comment type="subcellular location">
    <subcellularLocation>
        <location evidence="1">Cytoplasm</location>
    </subcellularLocation>
</comment>
<comment type="similarity">
    <text evidence="1">Belongs to the RecA family.</text>
</comment>
<gene>
    <name evidence="1" type="primary">recA</name>
    <name type="ordered locus">TDE_0872</name>
</gene>
<organism>
    <name type="scientific">Treponema denticola (strain ATCC 35405 / DSM 14222 / CIP 103919 / JCM 8153 / KCTC 15104)</name>
    <dbReference type="NCBI Taxonomy" id="243275"/>
    <lineage>
        <taxon>Bacteria</taxon>
        <taxon>Pseudomonadati</taxon>
        <taxon>Spirochaetota</taxon>
        <taxon>Spirochaetia</taxon>
        <taxon>Spirochaetales</taxon>
        <taxon>Treponemataceae</taxon>
        <taxon>Treponema</taxon>
    </lineage>
</organism>